<evidence type="ECO:0000255" key="1">
    <source>
        <dbReference type="HAMAP-Rule" id="MF_00090"/>
    </source>
</evidence>
<accession>Q2RTH7</accession>
<organism>
    <name type="scientific">Rhodospirillum rubrum (strain ATCC 11170 / ATH 1.1.1 / DSM 467 / LMG 4362 / NCIMB 8255 / S1)</name>
    <dbReference type="NCBI Taxonomy" id="269796"/>
    <lineage>
        <taxon>Bacteria</taxon>
        <taxon>Pseudomonadati</taxon>
        <taxon>Pseudomonadota</taxon>
        <taxon>Alphaproteobacteria</taxon>
        <taxon>Rhodospirillales</taxon>
        <taxon>Rhodospirillaceae</taxon>
        <taxon>Rhodospirillum</taxon>
    </lineage>
</organism>
<dbReference type="EC" id="2.1.1.77" evidence="1"/>
<dbReference type="EMBL" id="CP000230">
    <property type="protein sequence ID" value="ABC22568.1"/>
    <property type="molecule type" value="Genomic_DNA"/>
</dbReference>
<dbReference type="RefSeq" id="WP_011389521.1">
    <property type="nucleotide sequence ID" value="NC_007643.1"/>
</dbReference>
<dbReference type="RefSeq" id="YP_426855.1">
    <property type="nucleotide sequence ID" value="NC_007643.1"/>
</dbReference>
<dbReference type="SMR" id="Q2RTH7"/>
<dbReference type="STRING" id="269796.Rru_A1768"/>
<dbReference type="EnsemblBacteria" id="ABC22568">
    <property type="protein sequence ID" value="ABC22568"/>
    <property type="gene ID" value="Rru_A1768"/>
</dbReference>
<dbReference type="KEGG" id="rru:Rru_A1768"/>
<dbReference type="PATRIC" id="fig|269796.9.peg.1846"/>
<dbReference type="eggNOG" id="COG2518">
    <property type="taxonomic scope" value="Bacteria"/>
</dbReference>
<dbReference type="HOGENOM" id="CLU_055432_2_0_5"/>
<dbReference type="PhylomeDB" id="Q2RTH7"/>
<dbReference type="Proteomes" id="UP000001929">
    <property type="component" value="Chromosome"/>
</dbReference>
<dbReference type="GO" id="GO:0005737">
    <property type="term" value="C:cytoplasm"/>
    <property type="evidence" value="ECO:0007669"/>
    <property type="project" value="UniProtKB-SubCell"/>
</dbReference>
<dbReference type="GO" id="GO:0004719">
    <property type="term" value="F:protein-L-isoaspartate (D-aspartate) O-methyltransferase activity"/>
    <property type="evidence" value="ECO:0007669"/>
    <property type="project" value="UniProtKB-UniRule"/>
</dbReference>
<dbReference type="GO" id="GO:0032259">
    <property type="term" value="P:methylation"/>
    <property type="evidence" value="ECO:0007669"/>
    <property type="project" value="UniProtKB-KW"/>
</dbReference>
<dbReference type="GO" id="GO:0036211">
    <property type="term" value="P:protein modification process"/>
    <property type="evidence" value="ECO:0007669"/>
    <property type="project" value="UniProtKB-UniRule"/>
</dbReference>
<dbReference type="GO" id="GO:0030091">
    <property type="term" value="P:protein repair"/>
    <property type="evidence" value="ECO:0007669"/>
    <property type="project" value="UniProtKB-UniRule"/>
</dbReference>
<dbReference type="CDD" id="cd02440">
    <property type="entry name" value="AdoMet_MTases"/>
    <property type="match status" value="1"/>
</dbReference>
<dbReference type="FunFam" id="3.40.50.150:FF:000010">
    <property type="entry name" value="Protein-L-isoaspartate O-methyltransferase"/>
    <property type="match status" value="1"/>
</dbReference>
<dbReference type="Gene3D" id="3.40.50.150">
    <property type="entry name" value="Vaccinia Virus protein VP39"/>
    <property type="match status" value="1"/>
</dbReference>
<dbReference type="HAMAP" id="MF_00090">
    <property type="entry name" value="PIMT"/>
    <property type="match status" value="1"/>
</dbReference>
<dbReference type="InterPro" id="IPR000682">
    <property type="entry name" value="PCMT"/>
</dbReference>
<dbReference type="InterPro" id="IPR029063">
    <property type="entry name" value="SAM-dependent_MTases_sf"/>
</dbReference>
<dbReference type="NCBIfam" id="TIGR00080">
    <property type="entry name" value="pimt"/>
    <property type="match status" value="1"/>
</dbReference>
<dbReference type="NCBIfam" id="NF001453">
    <property type="entry name" value="PRK00312.1"/>
    <property type="match status" value="1"/>
</dbReference>
<dbReference type="PANTHER" id="PTHR11579">
    <property type="entry name" value="PROTEIN-L-ISOASPARTATE O-METHYLTRANSFERASE"/>
    <property type="match status" value="1"/>
</dbReference>
<dbReference type="PANTHER" id="PTHR11579:SF0">
    <property type="entry name" value="PROTEIN-L-ISOASPARTATE(D-ASPARTATE) O-METHYLTRANSFERASE"/>
    <property type="match status" value="1"/>
</dbReference>
<dbReference type="Pfam" id="PF01135">
    <property type="entry name" value="PCMT"/>
    <property type="match status" value="1"/>
</dbReference>
<dbReference type="SUPFAM" id="SSF53335">
    <property type="entry name" value="S-adenosyl-L-methionine-dependent methyltransferases"/>
    <property type="match status" value="1"/>
</dbReference>
<dbReference type="PROSITE" id="PS01279">
    <property type="entry name" value="PCMT"/>
    <property type="match status" value="1"/>
</dbReference>
<proteinExistence type="inferred from homology"/>
<sequence length="219" mass="23627">MSVPSRKIRLIMELRQNGVSATPVLAAIERVPRDAFVSAPFSDQAYENTALPIGCGQTISQPLVVGLMTQALDLNDRHKVLEIGTGSGYQTAVLARLCRRVYTIERHGALLREAEARLTALGLHRTVVTREGDGGRGWPEQAPFERILVTAAALDIPKVLVAQLAIGGVMVLPVGKESGAQEVVRVRRTAEDALVTERLFPVRFVPLVDGLPPRDAPGA</sequence>
<gene>
    <name evidence="1" type="primary">pcm</name>
    <name type="ordered locus">Rru_A1768</name>
</gene>
<reference key="1">
    <citation type="journal article" date="2011" name="Stand. Genomic Sci.">
        <title>Complete genome sequence of Rhodospirillum rubrum type strain (S1).</title>
        <authorList>
            <person name="Munk A.C."/>
            <person name="Copeland A."/>
            <person name="Lucas S."/>
            <person name="Lapidus A."/>
            <person name="Del Rio T.G."/>
            <person name="Barry K."/>
            <person name="Detter J.C."/>
            <person name="Hammon N."/>
            <person name="Israni S."/>
            <person name="Pitluck S."/>
            <person name="Brettin T."/>
            <person name="Bruce D."/>
            <person name="Han C."/>
            <person name="Tapia R."/>
            <person name="Gilna P."/>
            <person name="Schmutz J."/>
            <person name="Larimer F."/>
            <person name="Land M."/>
            <person name="Kyrpides N.C."/>
            <person name="Mavromatis K."/>
            <person name="Richardson P."/>
            <person name="Rohde M."/>
            <person name="Goeker M."/>
            <person name="Klenk H.P."/>
            <person name="Zhang Y."/>
            <person name="Roberts G.P."/>
            <person name="Reslewic S."/>
            <person name="Schwartz D.C."/>
        </authorList>
    </citation>
    <scope>NUCLEOTIDE SEQUENCE [LARGE SCALE GENOMIC DNA]</scope>
    <source>
        <strain>ATCC 11170 / ATH 1.1.1 / DSM 467 / LMG 4362 / NCIMB 8255 / S1</strain>
    </source>
</reference>
<keyword id="KW-0963">Cytoplasm</keyword>
<keyword id="KW-0489">Methyltransferase</keyword>
<keyword id="KW-1185">Reference proteome</keyword>
<keyword id="KW-0949">S-adenosyl-L-methionine</keyword>
<keyword id="KW-0808">Transferase</keyword>
<feature type="chain" id="PRO_0000351928" description="Protein-L-isoaspartate O-methyltransferase">
    <location>
        <begin position="1"/>
        <end position="219"/>
    </location>
</feature>
<feature type="active site" evidence="1">
    <location>
        <position position="60"/>
    </location>
</feature>
<name>PIMT_RHORT</name>
<protein>
    <recommendedName>
        <fullName evidence="1">Protein-L-isoaspartate O-methyltransferase</fullName>
        <ecNumber evidence="1">2.1.1.77</ecNumber>
    </recommendedName>
    <alternativeName>
        <fullName evidence="1">L-isoaspartyl protein carboxyl methyltransferase</fullName>
    </alternativeName>
    <alternativeName>
        <fullName evidence="1">Protein L-isoaspartyl methyltransferase</fullName>
    </alternativeName>
    <alternativeName>
        <fullName evidence="1">Protein-beta-aspartate methyltransferase</fullName>
        <shortName evidence="1">PIMT</shortName>
    </alternativeName>
</protein>
<comment type="function">
    <text evidence="1">Catalyzes the methyl esterification of L-isoaspartyl residues in peptides and proteins that result from spontaneous decomposition of normal L-aspartyl and L-asparaginyl residues. It plays a role in the repair and/or degradation of damaged proteins.</text>
</comment>
<comment type="catalytic activity">
    <reaction evidence="1">
        <text>[protein]-L-isoaspartate + S-adenosyl-L-methionine = [protein]-L-isoaspartate alpha-methyl ester + S-adenosyl-L-homocysteine</text>
        <dbReference type="Rhea" id="RHEA:12705"/>
        <dbReference type="Rhea" id="RHEA-COMP:12143"/>
        <dbReference type="Rhea" id="RHEA-COMP:12144"/>
        <dbReference type="ChEBI" id="CHEBI:57856"/>
        <dbReference type="ChEBI" id="CHEBI:59789"/>
        <dbReference type="ChEBI" id="CHEBI:90596"/>
        <dbReference type="ChEBI" id="CHEBI:90598"/>
        <dbReference type="EC" id="2.1.1.77"/>
    </reaction>
</comment>
<comment type="subcellular location">
    <subcellularLocation>
        <location evidence="1">Cytoplasm</location>
    </subcellularLocation>
</comment>
<comment type="similarity">
    <text evidence="1">Belongs to the methyltransferase superfamily. L-isoaspartyl/D-aspartyl protein methyltransferase family.</text>
</comment>